<protein>
    <recommendedName>
        <fullName evidence="4">Protein-arginine rhamnosyltransferase</fullName>
        <ecNumber evidence="2">2.4.1.-</ecNumber>
    </recommendedName>
    <alternativeName>
        <fullName evidence="3">EF-P arginine rhamnosyltransferase</fullName>
    </alternativeName>
</protein>
<dbReference type="EC" id="2.4.1.-" evidence="2"/>
<dbReference type="EMBL" id="AE014299">
    <property type="protein sequence ID" value="AAN55363.1"/>
    <property type="molecule type" value="Genomic_DNA"/>
</dbReference>
<dbReference type="RefSeq" id="NP_717919.1">
    <property type="nucleotide sequence ID" value="NC_004347.2"/>
</dbReference>
<dbReference type="RefSeq" id="WP_011072321.1">
    <property type="nucleotide sequence ID" value="NC_004347.2"/>
</dbReference>
<dbReference type="SMR" id="Q8EEP8"/>
<dbReference type="STRING" id="211586.SO_2329"/>
<dbReference type="PaxDb" id="211586-SO_2329"/>
<dbReference type="KEGG" id="son:SO_2329"/>
<dbReference type="PATRIC" id="fig|211586.12.peg.2244"/>
<dbReference type="eggNOG" id="COG4394">
    <property type="taxonomic scope" value="Bacteria"/>
</dbReference>
<dbReference type="HOGENOM" id="CLU_060250_0_0_6"/>
<dbReference type="OrthoDB" id="209085at2"/>
<dbReference type="PhylomeDB" id="Q8EEP8"/>
<dbReference type="BioCyc" id="SONE211586:G1GMP-2128-MONOMER"/>
<dbReference type="Proteomes" id="UP000008186">
    <property type="component" value="Chromosome"/>
</dbReference>
<dbReference type="GO" id="GO:0106361">
    <property type="term" value="F:protein-arginine rhamnosyltransferase activity"/>
    <property type="evidence" value="ECO:0007669"/>
    <property type="project" value="InterPro"/>
</dbReference>
<dbReference type="InterPro" id="IPR016633">
    <property type="entry name" value="EarP"/>
</dbReference>
<dbReference type="NCBIfam" id="TIGR03837">
    <property type="entry name" value="efp_Arg_rhamno"/>
    <property type="match status" value="1"/>
</dbReference>
<dbReference type="Pfam" id="PF10093">
    <property type="entry name" value="EarP"/>
    <property type="match status" value="1"/>
</dbReference>
<dbReference type="PIRSF" id="PIRSF015557">
    <property type="entry name" value="UCP015557"/>
    <property type="match status" value="1"/>
</dbReference>
<gene>
    <name evidence="3" type="primary">earP</name>
    <name evidence="5" type="ordered locus">SO_2329</name>
</gene>
<evidence type="ECO:0000250" key="1">
    <source>
        <dbReference type="UniProtKB" id="Q9HZZ1"/>
    </source>
</evidence>
<evidence type="ECO:0000269" key="2">
    <source>
    </source>
</evidence>
<evidence type="ECO:0000303" key="3">
    <source>
    </source>
</evidence>
<evidence type="ECO:0000305" key="4"/>
<evidence type="ECO:0000312" key="5">
    <source>
        <dbReference type="EMBL" id="AAN55363.1"/>
    </source>
</evidence>
<sequence length="395" mass="44758">MSTSSNASHWDIFCTVVDNYGDIGVTWRLAKQLVNEYHIPIILWVDDLNSFSHILPTLNPKLVSQCFNGVIINHWTTPLAVPYLPGKVLIEAFACELPDEVKLQLATLHKTAPQAVPLWLNLEYLSAEDWVDGCHGLPSMQVSGIKKYFYFPGFTPKTGGLICERELFAERDAWQQDPANKLQLFESLGLKDIQAQDSVFSIFSYETDSLPALCELWQARAKNDAKIHALLPKGRSLNSLQHLLPCPVDALMPGQQIKLGDLTLHILPMTDQQGFDRLLWSCDVNIVRGEDSFLRAQWAAKPFIWHIYPQEDDYHLIKLEAFIRLYCDNLAPDIADTWSKLNFAFSQGQQSAVKTHWQNLNPVSLPLLQHAKEWPIDAINAADLATRLVQFVKKS</sequence>
<accession>Q8EEP8</accession>
<name>EARP_SHEON</name>
<feature type="chain" id="PRO_0000452683" description="Protein-arginine rhamnosyltransferase">
    <location>
        <begin position="1"/>
        <end position="395"/>
    </location>
</feature>
<feature type="active site" description="Proton acceptor" evidence="1">
    <location>
        <position position="22"/>
    </location>
</feature>
<feature type="active site" evidence="1">
    <location>
        <position position="290"/>
    </location>
</feature>
<feature type="binding site" evidence="1">
    <location>
        <begin position="19"/>
        <end position="22"/>
    </location>
    <ligand>
        <name>dTDP-beta-L-rhamnose</name>
        <dbReference type="ChEBI" id="CHEBI:57510"/>
    </ligand>
</feature>
<feature type="binding site" evidence="1">
    <location>
        <position position="205"/>
    </location>
    <ligand>
        <name>dTDP-beta-L-rhamnose</name>
        <dbReference type="ChEBI" id="CHEBI:57510"/>
    </ligand>
</feature>
<feature type="binding site" evidence="1">
    <location>
        <position position="272"/>
    </location>
    <ligand>
        <name>dTDP-beta-L-rhamnose</name>
        <dbReference type="ChEBI" id="CHEBI:57510"/>
    </ligand>
</feature>
<feature type="binding site" evidence="1">
    <location>
        <begin position="288"/>
        <end position="292"/>
    </location>
    <ligand>
        <name>dTDP-beta-L-rhamnose</name>
        <dbReference type="ChEBI" id="CHEBI:57510"/>
    </ligand>
</feature>
<comment type="function">
    <text evidence="2">Protein-arginine rhamnosyltransferase that catalyzes the transfer of a single rhamnose to elongation factor P (EF-P) on 'Lys-32', a modification required for EF-P-dependent rescue of polyproline stalled ribosomes.</text>
</comment>
<comment type="catalytic activity">
    <reaction evidence="2">
        <text>dTDP-beta-L-rhamnose + L-arginyl-[protein] = N(omega)-(alpha-L-rhamnosyl)-L-arginyl-[protein] + dTDP + H(+)</text>
        <dbReference type="Rhea" id="RHEA:66692"/>
        <dbReference type="Rhea" id="RHEA-COMP:10532"/>
        <dbReference type="Rhea" id="RHEA-COMP:17096"/>
        <dbReference type="ChEBI" id="CHEBI:15378"/>
        <dbReference type="ChEBI" id="CHEBI:29965"/>
        <dbReference type="ChEBI" id="CHEBI:57510"/>
        <dbReference type="ChEBI" id="CHEBI:58369"/>
        <dbReference type="ChEBI" id="CHEBI:167445"/>
    </reaction>
    <physiologicalReaction direction="left-to-right" evidence="2">
        <dbReference type="Rhea" id="RHEA:66693"/>
    </physiologicalReaction>
</comment>
<comment type="domain">
    <text evidence="1">Adopts a GT-B fold and acts as an inverting enzyme that converts the beta-configuration in the dTDP-beta-L-rhamnose donor to the alpha configuration in the N-linked (Rha) arginine product.</text>
</comment>
<comment type="similarity">
    <text evidence="4">Belongs to the glycosyltransferase 104 family.</text>
</comment>
<organism>
    <name type="scientific">Shewanella oneidensis (strain ATCC 700550 / JCM 31522 / CIP 106686 / LMG 19005 / NCIMB 14063 / MR-1)</name>
    <dbReference type="NCBI Taxonomy" id="211586"/>
    <lineage>
        <taxon>Bacteria</taxon>
        <taxon>Pseudomonadati</taxon>
        <taxon>Pseudomonadota</taxon>
        <taxon>Gammaproteobacteria</taxon>
        <taxon>Alteromonadales</taxon>
        <taxon>Shewanellaceae</taxon>
        <taxon>Shewanella</taxon>
    </lineage>
</organism>
<reference key="1">
    <citation type="journal article" date="2002" name="Nat. Biotechnol.">
        <title>Genome sequence of the dissimilatory metal ion-reducing bacterium Shewanella oneidensis.</title>
        <authorList>
            <person name="Heidelberg J.F."/>
            <person name="Paulsen I.T."/>
            <person name="Nelson K.E."/>
            <person name="Gaidos E.J."/>
            <person name="Nelson W.C."/>
            <person name="Read T.D."/>
            <person name="Eisen J.A."/>
            <person name="Seshadri R."/>
            <person name="Ward N.L."/>
            <person name="Methe B.A."/>
            <person name="Clayton R.A."/>
            <person name="Meyer T."/>
            <person name="Tsapin A."/>
            <person name="Scott J."/>
            <person name="Beanan M.J."/>
            <person name="Brinkac L.M."/>
            <person name="Daugherty S.C."/>
            <person name="DeBoy R.T."/>
            <person name="Dodson R.J."/>
            <person name="Durkin A.S."/>
            <person name="Haft D.H."/>
            <person name="Kolonay J.F."/>
            <person name="Madupu R."/>
            <person name="Peterson J.D."/>
            <person name="Umayam L.A."/>
            <person name="White O."/>
            <person name="Wolf A.M."/>
            <person name="Vamathevan J.J."/>
            <person name="Weidman J.F."/>
            <person name="Impraim M."/>
            <person name="Lee K."/>
            <person name="Berry K.J."/>
            <person name="Lee C."/>
            <person name="Mueller J."/>
            <person name="Khouri H.M."/>
            <person name="Gill J."/>
            <person name="Utterback T.R."/>
            <person name="McDonald L.A."/>
            <person name="Feldblyum T.V."/>
            <person name="Smith H.O."/>
            <person name="Venter J.C."/>
            <person name="Nealson K.H."/>
            <person name="Fraser C.M."/>
        </authorList>
    </citation>
    <scope>NUCLEOTIDE SEQUENCE [LARGE SCALE GENOMIC DNA]</scope>
    <source>
        <strain>ATCC 700550 / JCM 31522 / CIP 106686 / LMG 19005 / NCIMB 14063 / MR-1</strain>
    </source>
</reference>
<reference key="2">
    <citation type="journal article" date="2015" name="Nat. Chem. Biol.">
        <title>Arginine-rhamnosylation as new strategy to activate translation elongation factor P.</title>
        <authorList>
            <person name="Lassak J."/>
            <person name="Keilhauer E.C."/>
            <person name="Fuerst M."/>
            <person name="Wuichet K."/>
            <person name="Goedeke J."/>
            <person name="Starosta A.L."/>
            <person name="Chen J.M."/>
            <person name="Soegaard-Andersen L."/>
            <person name="Rohr J."/>
            <person name="Wilson D.N."/>
            <person name="Haeussler S."/>
            <person name="Mann M."/>
            <person name="Jung K."/>
        </authorList>
    </citation>
    <scope>FUNCTION</scope>
    <scope>CATALYTIC ACTIVITY</scope>
</reference>
<proteinExistence type="evidence at protein level"/>
<keyword id="KW-0328">Glycosyltransferase</keyword>
<keyword id="KW-1185">Reference proteome</keyword>
<keyword id="KW-0808">Transferase</keyword>